<accession>P01418</accession>
<sequence length="60" mass="6743">RICYNHQSTTPATTKSCGENSCYKKTWSDHRGTIIERGCGCPKVKRGVHLHCCQSDKCNN</sequence>
<proteinExistence type="evidence at protein level"/>
<feature type="chain" id="PRO_0000093575" description="Short neurotoxin 1" evidence="3">
    <location>
        <begin position="1"/>
        <end position="60"/>
    </location>
</feature>
<feature type="disulfide bond" evidence="1">
    <location>
        <begin position="3"/>
        <end position="22"/>
    </location>
</feature>
<feature type="disulfide bond" evidence="1">
    <location>
        <begin position="17"/>
        <end position="39"/>
    </location>
</feature>
<feature type="disulfide bond" evidence="1">
    <location>
        <begin position="41"/>
        <end position="52"/>
    </location>
</feature>
<feature type="disulfide bond" evidence="1">
    <location>
        <begin position="53"/>
        <end position="58"/>
    </location>
</feature>
<organism>
    <name type="scientific">Dendroaspis viridis</name>
    <name type="common">Western green mamba</name>
    <dbReference type="NCBI Taxonomy" id="8621"/>
    <lineage>
        <taxon>Eukaryota</taxon>
        <taxon>Metazoa</taxon>
        <taxon>Chordata</taxon>
        <taxon>Craniata</taxon>
        <taxon>Vertebrata</taxon>
        <taxon>Euteleostomi</taxon>
        <taxon>Lepidosauria</taxon>
        <taxon>Squamata</taxon>
        <taxon>Bifurcata</taxon>
        <taxon>Unidentata</taxon>
        <taxon>Episquamata</taxon>
        <taxon>Toxicofera</taxon>
        <taxon>Serpentes</taxon>
        <taxon>Colubroidea</taxon>
        <taxon>Elapidae</taxon>
        <taxon>Elapinae</taxon>
        <taxon>Dendroaspis</taxon>
    </lineage>
</organism>
<name>3S11_DENVI</name>
<dbReference type="PIR" id="A91220">
    <property type="entry name" value="N1EP1V"/>
</dbReference>
<dbReference type="SMR" id="P01418"/>
<dbReference type="GO" id="GO:0005576">
    <property type="term" value="C:extracellular region"/>
    <property type="evidence" value="ECO:0007669"/>
    <property type="project" value="UniProtKB-SubCell"/>
</dbReference>
<dbReference type="GO" id="GO:0030550">
    <property type="term" value="F:acetylcholine receptor inhibitor activity"/>
    <property type="evidence" value="ECO:0007669"/>
    <property type="project" value="UniProtKB-KW"/>
</dbReference>
<dbReference type="GO" id="GO:0099106">
    <property type="term" value="F:ion channel regulator activity"/>
    <property type="evidence" value="ECO:0007669"/>
    <property type="project" value="UniProtKB-KW"/>
</dbReference>
<dbReference type="GO" id="GO:0090729">
    <property type="term" value="F:toxin activity"/>
    <property type="evidence" value="ECO:0007669"/>
    <property type="project" value="UniProtKB-KW"/>
</dbReference>
<dbReference type="CDD" id="cd00206">
    <property type="entry name" value="TFP_snake_toxin"/>
    <property type="match status" value="1"/>
</dbReference>
<dbReference type="FunFam" id="2.10.60.10:FF:000024">
    <property type="entry name" value="Cytotoxin 1"/>
    <property type="match status" value="1"/>
</dbReference>
<dbReference type="Gene3D" id="2.10.60.10">
    <property type="entry name" value="CD59"/>
    <property type="match status" value="1"/>
</dbReference>
<dbReference type="InterPro" id="IPR003571">
    <property type="entry name" value="Snake_3FTx"/>
</dbReference>
<dbReference type="InterPro" id="IPR045860">
    <property type="entry name" value="Snake_toxin-like_sf"/>
</dbReference>
<dbReference type="InterPro" id="IPR018354">
    <property type="entry name" value="Snake_toxin_con_site"/>
</dbReference>
<dbReference type="InterPro" id="IPR054131">
    <property type="entry name" value="Toxin_cobra-type"/>
</dbReference>
<dbReference type="Pfam" id="PF21947">
    <property type="entry name" value="Toxin_cobra-type"/>
    <property type="match status" value="1"/>
</dbReference>
<dbReference type="SUPFAM" id="SSF57302">
    <property type="entry name" value="Snake toxin-like"/>
    <property type="match status" value="1"/>
</dbReference>
<dbReference type="PROSITE" id="PS00272">
    <property type="entry name" value="SNAKE_TOXIN"/>
    <property type="match status" value="1"/>
</dbReference>
<comment type="function">
    <text evidence="2">Binds to muscle nicotinic acetylcholine receptor (nAChR) and inhibit acetylcholine from binding to the receptor, thereby impairing neuromuscular transmission.</text>
</comment>
<comment type="subcellular location">
    <subcellularLocation>
        <location evidence="3">Secreted</location>
    </subcellularLocation>
</comment>
<comment type="tissue specificity">
    <text evidence="4">Expressed by the venom gland.</text>
</comment>
<comment type="toxic dose">
    <text evidence="3">LD(50) is 0.08 mg/kg by intraperitoneal injection.</text>
</comment>
<comment type="similarity">
    <text evidence="4">Belongs to the three-finger toxin family. Short-chain subfamily. Type I alpha-neurotoxin sub-subfamily.</text>
</comment>
<protein>
    <recommendedName>
        <fullName>Short neurotoxin 1</fullName>
    </recommendedName>
    <alternativeName>
        <fullName>Neurotoxin 4.11.3</fullName>
    </alternativeName>
</protein>
<keyword id="KW-0008">Acetylcholine receptor inhibiting toxin</keyword>
<keyword id="KW-0903">Direct protein sequencing</keyword>
<keyword id="KW-1015">Disulfide bond</keyword>
<keyword id="KW-0872">Ion channel impairing toxin</keyword>
<keyword id="KW-0528">Neurotoxin</keyword>
<keyword id="KW-0629">Postsynaptic neurotoxin</keyword>
<keyword id="KW-0964">Secreted</keyword>
<keyword id="KW-0800">Toxin</keyword>
<evidence type="ECO:0000250" key="1">
    <source>
        <dbReference type="UniProtKB" id="P0C1Z0"/>
    </source>
</evidence>
<evidence type="ECO:0000250" key="2">
    <source>
        <dbReference type="UniProtKB" id="P60775"/>
    </source>
</evidence>
<evidence type="ECO:0000269" key="3">
    <source>
    </source>
</evidence>
<evidence type="ECO:0000305" key="4"/>
<reference key="1">
    <citation type="journal article" date="1974" name="Eur. J. Biochem.">
        <title>The primary sequences and neuromuscular effects of three neurotoxic polypeptides from the venom of Dendroaspis viridis.</title>
        <authorList>
            <person name="Banks B.E.C."/>
            <person name="Miledi R."/>
            <person name="Shipolini R.A."/>
        </authorList>
    </citation>
    <scope>PROTEIN SEQUENCE</scope>
    <scope>TOXIC DOSE</scope>
    <scope>SUBCELLULAR LOCATION</scope>
    <source>
        <tissue>Venom</tissue>
    </source>
</reference>